<sequence>MSLSIDVTSLPSIPSTIYKNESSSTTSTLSGKSIGRSEQYISPDAEAFNKYMLSKSPEDIGPSDSASNDPLTSFSIRSNAVKTNADAGVSMDSSAQSRPSSNVGCDQVDFSLNKGLKVKANLDSSISISTDTKKEKSKQNHKSRKHYPRIEAESDSDDYVLDDSDSDDGKCKNCKYKKKYFALRMRMKQVAMQLIEDL</sequence>
<feature type="chain" id="PRO_0000149641" description="Non-structural protein 5">
    <location>
        <begin position="1"/>
        <end position="198"/>
    </location>
</feature>
<feature type="region of interest" description="Disordered" evidence="2">
    <location>
        <begin position="13"/>
        <end position="37"/>
    </location>
</feature>
<feature type="region of interest" description="Disordered" evidence="2">
    <location>
        <begin position="53"/>
        <end position="72"/>
    </location>
</feature>
<feature type="region of interest" description="Disordered" evidence="2">
    <location>
        <begin position="129"/>
        <end position="167"/>
    </location>
</feature>
<feature type="compositionally biased region" description="Acidic residues" evidence="2">
    <location>
        <begin position="153"/>
        <end position="166"/>
    </location>
</feature>
<feature type="binding site" evidence="1">
    <location>
        <position position="92"/>
    </location>
    <ligand>
        <name>Mg(2+)</name>
        <dbReference type="ChEBI" id="CHEBI:18420"/>
    </ligand>
</feature>
<feature type="modified residue" description="Phosphoserine; by host CK1" evidence="1">
    <location>
        <position position="67"/>
    </location>
</feature>
<feature type="modified residue" description="Phosphoserine; by host" evidence="1">
    <location>
        <position position="154"/>
    </location>
</feature>
<feature type="modified residue" description="Phosphoserine; by host" evidence="1">
    <location>
        <position position="156"/>
    </location>
</feature>
<feature type="modified residue" description="Phosphoserine; by host" evidence="1">
    <location>
        <position position="164"/>
    </location>
</feature>
<feature type="modified residue" description="Phosphoserine; by host" evidence="1">
    <location>
        <position position="166"/>
    </location>
</feature>
<accession>P11202</accession>
<dbReference type="EMBL" id="X07831">
    <property type="protein sequence ID" value="CAA30683.1"/>
    <property type="molecule type" value="Genomic_RNA"/>
</dbReference>
<dbReference type="EMBL" id="M28347">
    <property type="protein sequence ID" value="AAA66881.1"/>
    <property type="molecule type" value="Genomic_RNA"/>
</dbReference>
<dbReference type="PIR" id="S01246">
    <property type="entry name" value="MNXRSE"/>
</dbReference>
<dbReference type="Proteomes" id="UP000007180">
    <property type="component" value="Genome"/>
</dbReference>
<dbReference type="GO" id="GO:0030430">
    <property type="term" value="C:host cell cytoplasm"/>
    <property type="evidence" value="ECO:0007669"/>
    <property type="project" value="UniProtKB-SubCell"/>
</dbReference>
<dbReference type="GO" id="GO:0016887">
    <property type="term" value="F:ATP hydrolysis activity"/>
    <property type="evidence" value="ECO:0007669"/>
    <property type="project" value="UniProtKB-UniRule"/>
</dbReference>
<dbReference type="GO" id="GO:0000287">
    <property type="term" value="F:magnesium ion binding"/>
    <property type="evidence" value="ECO:0007669"/>
    <property type="project" value="UniProtKB-UniRule"/>
</dbReference>
<dbReference type="GO" id="GO:0000166">
    <property type="term" value="F:nucleotide binding"/>
    <property type="evidence" value="ECO:0007669"/>
    <property type="project" value="UniProtKB-UniRule"/>
</dbReference>
<dbReference type="GO" id="GO:0003723">
    <property type="term" value="F:RNA binding"/>
    <property type="evidence" value="ECO:0007669"/>
    <property type="project" value="UniProtKB-UniRule"/>
</dbReference>
<dbReference type="GO" id="GO:0019079">
    <property type="term" value="P:viral genome replication"/>
    <property type="evidence" value="ECO:0007669"/>
    <property type="project" value="UniProtKB-UniRule"/>
</dbReference>
<dbReference type="HAMAP" id="MF_04092">
    <property type="entry name" value="ROTA_NSP5"/>
    <property type="match status" value="1"/>
</dbReference>
<dbReference type="InterPro" id="IPR002512">
    <property type="entry name" value="Rotavirus_A/C_NSP5"/>
</dbReference>
<dbReference type="Pfam" id="PF01525">
    <property type="entry name" value="Rota_NS26"/>
    <property type="match status" value="2"/>
</dbReference>
<dbReference type="PIRSF" id="PIRSF004006">
    <property type="entry name" value="Rota_NS26"/>
    <property type="match status" value="1"/>
</dbReference>
<name>NSP5_ROTS1</name>
<evidence type="ECO:0000255" key="1">
    <source>
        <dbReference type="HAMAP-Rule" id="MF_04092"/>
    </source>
</evidence>
<evidence type="ECO:0000256" key="2">
    <source>
        <dbReference type="SAM" id="MobiDB-lite"/>
    </source>
</evidence>
<organismHost>
    <name type="scientific">Macaca mulatta</name>
    <name type="common">Rhesus macaque</name>
    <dbReference type="NCBI Taxonomy" id="9544"/>
</organismHost>
<reference key="1">
    <citation type="journal article" date="1988" name="Nucleic Acids Res.">
        <title>Simian rotavirus SA11 segment 11 contains overlapping reading frames.</title>
        <authorList>
            <person name="Mitchell D.B."/>
            <person name="Both G.W."/>
        </authorList>
    </citation>
    <scope>NUCLEOTIDE SEQUENCE [GENOMIC RNA]</scope>
</reference>
<reference key="2">
    <citation type="journal article" date="1989" name="J. Virol.">
        <title>Rotavirus SA11 genome segment 11 protein is a nonstructural phosphoprotein.</title>
        <authorList>
            <person name="Welch S.K."/>
            <person name="Crawford S.E."/>
            <person name="Estes M.K."/>
        </authorList>
    </citation>
    <scope>NUCLEOTIDE SEQUENCE [GENOMIC RNA]</scope>
</reference>
<protein>
    <recommendedName>
        <fullName evidence="1">Non-structural protein 5</fullName>
        <shortName evidence="1">NSP5</shortName>
    </recommendedName>
    <alternativeName>
        <fullName evidence="1">NS26</fullName>
    </alternativeName>
</protein>
<keyword id="KW-0325">Glycoprotein</keyword>
<keyword id="KW-1035">Host cytoplasm</keyword>
<keyword id="KW-0460">Magnesium</keyword>
<keyword id="KW-0479">Metal-binding</keyword>
<keyword id="KW-0547">Nucleotide-binding</keyword>
<keyword id="KW-0597">Phosphoprotein</keyword>
<keyword id="KW-1185">Reference proteome</keyword>
<keyword id="KW-0694">RNA-binding</keyword>
<comment type="function">
    <text evidence="1">Plays an essential role in the viral genome replication. Participates, together with NSP2, in the formation of viral factories (viroplasms), which are large inclusions in the host cytoplasm where replication intermediates are assembled and viral RNA replication takes place. Orchestrates the recruitment of viroplasmic proteins such as capsid proteins to these factories. Participates in the selective exclusion of host proteins from stress granules (SG) and P bodies (PB). Also participates in the sequestration of these remodeled organelles in viral factories.</text>
</comment>
<comment type="cofactor">
    <cofactor evidence="1">
        <name>Mg(2+)</name>
        <dbReference type="ChEBI" id="CHEBI:18420"/>
    </cofactor>
</comment>
<comment type="subunit">
    <text evidence="1">Homodimer. Interacts with VP1. Interacts with VP2. Interacts with NSP2; this interaction leads to up-regulation of NSP5 hyperphosphorylation and formation of virus factories. Interacts with NSP6. Participates in the selective exclusion of host proteins from stress granules (SG) and P bodies (PB). Also participates in the sequestration of these remodeled organelles in viral factories.</text>
</comment>
<comment type="subcellular location">
    <subcellularLocation>
        <location evidence="1">Host cytoplasm</location>
    </subcellularLocation>
    <text evidence="1">Found in spherical cytoplasmic structures, called virus factories, that appear early after infection and are the site of viral replication and packaging.</text>
</comment>
<comment type="PTM">
    <text evidence="1">O-glycosylated.</text>
</comment>
<comment type="PTM">
    <text evidence="1">Hyperphosphorylated on serine residues, when in dimeric form. Phosphorylation by host CK1 is required for the hyperphosphorylation of NSP5 dimer.</text>
</comment>
<comment type="similarity">
    <text evidence="1">Belongs to the rotavirus NSP5 family.</text>
</comment>
<organism>
    <name type="scientific">Rotavirus A (strain RVA/SA11-Both/G3P5B[2])</name>
    <name type="common">RV-A</name>
    <name type="synonym">Simian Agent 11 (strain Both)</name>
    <dbReference type="NCBI Taxonomy" id="37137"/>
    <lineage>
        <taxon>Viruses</taxon>
        <taxon>Riboviria</taxon>
        <taxon>Orthornavirae</taxon>
        <taxon>Duplornaviricota</taxon>
        <taxon>Resentoviricetes</taxon>
        <taxon>Reovirales</taxon>
        <taxon>Sedoreoviridae</taxon>
        <taxon>Rotavirus</taxon>
        <taxon>Rotavirus A</taxon>
    </lineage>
</organism>
<proteinExistence type="inferred from homology"/>